<comment type="function">
    <text>SNC1 and SNC2 are vesicle-targeting proteins essential for normal secretory traffic between the Golgi and the plasma membrane. They may also be involved in vesicle fusion.</text>
</comment>
<comment type="interaction">
    <interactant intactId="EBI-17512">
        <id>P33328</id>
    </interactant>
    <interactant intactId="EBI-2206525">
        <id>P32867</id>
        <label>SSO1</label>
    </interactant>
    <organismsDiffer>false</organismsDiffer>
    <experiments>2</experiments>
</comment>
<comment type="subcellular location">
    <subcellularLocation>
        <location>Endomembrane system</location>
        <topology>Single-pass type IV membrane protein</topology>
    </subcellularLocation>
    <text evidence="7">Post-Golgi vesicle membrane.</text>
</comment>
<comment type="PTM">
    <text evidence="5 6">Palmitoylated by SWF1.</text>
</comment>
<comment type="miscellaneous">
    <text evidence="4">Present with 300 molecules/cell in log phase SD medium.</text>
</comment>
<comment type="similarity">
    <text evidence="7">Belongs to the synaptobrevin family.</text>
</comment>
<name>SNC2_YEAST</name>
<protein>
    <recommendedName>
        <fullName>Synaptobrevin homolog 2</fullName>
    </recommendedName>
</protein>
<keyword id="KW-0175">Coiled coil</keyword>
<keyword id="KW-1017">Isopeptide bond</keyword>
<keyword id="KW-0449">Lipoprotein</keyword>
<keyword id="KW-0472">Membrane</keyword>
<keyword id="KW-0564">Palmitate</keyword>
<keyword id="KW-0597">Phosphoprotein</keyword>
<keyword id="KW-1185">Reference proteome</keyword>
<keyword id="KW-0812">Transmembrane</keyword>
<keyword id="KW-1133">Transmembrane helix</keyword>
<keyword id="KW-0832">Ubl conjugation</keyword>
<organism>
    <name type="scientific">Saccharomyces cerevisiae (strain ATCC 204508 / S288c)</name>
    <name type="common">Baker's yeast</name>
    <dbReference type="NCBI Taxonomy" id="559292"/>
    <lineage>
        <taxon>Eukaryota</taxon>
        <taxon>Fungi</taxon>
        <taxon>Dikarya</taxon>
        <taxon>Ascomycota</taxon>
        <taxon>Saccharomycotina</taxon>
        <taxon>Saccharomycetes</taxon>
        <taxon>Saccharomycetales</taxon>
        <taxon>Saccharomycetaceae</taxon>
        <taxon>Saccharomyces</taxon>
    </lineage>
</organism>
<proteinExistence type="evidence at protein level"/>
<feature type="chain" id="PRO_0000206745" description="Synaptobrevin homolog 2">
    <location>
        <begin position="1"/>
        <end position="115"/>
    </location>
</feature>
<feature type="topological domain" description="Cytoplasmic" evidence="1">
    <location>
        <begin position="1"/>
        <end position="93"/>
    </location>
</feature>
<feature type="transmembrane region" description="Helical; Anchor for type IV membrane protein" evidence="1">
    <location>
        <begin position="94"/>
        <end position="112"/>
    </location>
</feature>
<feature type="topological domain" description="Vesicular" evidence="1">
    <location>
        <begin position="113"/>
        <end position="115"/>
    </location>
</feature>
<feature type="domain" description="v-SNARE coiled-coil homology" evidence="2">
    <location>
        <begin position="27"/>
        <end position="87"/>
    </location>
</feature>
<feature type="region of interest" description="Disordered" evidence="3">
    <location>
        <begin position="1"/>
        <end position="28"/>
    </location>
</feature>
<feature type="compositionally biased region" description="Low complexity" evidence="3">
    <location>
        <begin position="1"/>
        <end position="16"/>
    </location>
</feature>
<feature type="compositionally biased region" description="Polar residues" evidence="3">
    <location>
        <begin position="17"/>
        <end position="28"/>
    </location>
</feature>
<feature type="modified residue" description="Phosphoserine" evidence="9">
    <location>
        <position position="58"/>
    </location>
</feature>
<feature type="lipid moiety-binding region" description="S-palmitoyl cysteine" evidence="8">
    <location>
        <position position="94"/>
    </location>
</feature>
<feature type="cross-link" description="Glycyl lysine isopeptide (Lys-Gly) (interchain with G-Cter in ubiquitin)" evidence="10">
    <location>
        <position position="62"/>
    </location>
</feature>
<feature type="sequence conflict" description="In Ref. 1; AAA19816." evidence="7" ref="1">
    <original>S</original>
    <variation>T</variation>
    <location>
        <position position="115"/>
    </location>
</feature>
<sequence length="115" mass="12957">MSSSVPYDPYVPPEESNSGANPNSQNKTAALRQEIDDTVGIMRDNINKVAERGERLTSIEDKADNLAISAQGFKRGANRVRKQMWWKDLKMRMCLFLVVIILLVVIIVPIVVHFS</sequence>
<dbReference type="EMBL" id="L16243">
    <property type="protein sequence ID" value="AAA19816.1"/>
    <property type="molecule type" value="Unassigned_DNA"/>
</dbReference>
<dbReference type="EMBL" id="Z49821">
    <property type="protein sequence ID" value="CAA89974.1"/>
    <property type="molecule type" value="Genomic_DNA"/>
</dbReference>
<dbReference type="EMBL" id="Z75235">
    <property type="protein sequence ID" value="CAA99647.1"/>
    <property type="molecule type" value="Genomic_DNA"/>
</dbReference>
<dbReference type="EMBL" id="BK006948">
    <property type="protein sequence ID" value="DAA11090.1"/>
    <property type="molecule type" value="Genomic_DNA"/>
</dbReference>
<dbReference type="PIR" id="S62059">
    <property type="entry name" value="S62059"/>
</dbReference>
<dbReference type="RefSeq" id="NP_014972.3">
    <property type="nucleotide sequence ID" value="NM_001183747.3"/>
</dbReference>
<dbReference type="SMR" id="P33328"/>
<dbReference type="BioGRID" id="34712">
    <property type="interactions" value="325"/>
</dbReference>
<dbReference type="ComplexPortal" id="CPX-5321">
    <property type="entry name" value="Endosomal SNARE complex TLG2-VTI1-TLG1-SNC2"/>
</dbReference>
<dbReference type="ComplexPortal" id="CPX-5461">
    <property type="entry name" value="Endosomal SNARE complex PEP12-VTI1-SYN8-SNC2"/>
</dbReference>
<dbReference type="ComplexPortal" id="CPX-5462">
    <property type="entry name" value="Endosomal SNARE complex PEP12-VTI1-TLG1-SNC2"/>
</dbReference>
<dbReference type="ComplexPortal" id="CPX-5463">
    <property type="entry name" value="Vesicular SNARE complex SSO1-SEC9-SNC2"/>
</dbReference>
<dbReference type="ComplexPortal" id="CPX-5465">
    <property type="entry name" value="Vesicular SNARE complex SSO2-SEC9-SNC2"/>
</dbReference>
<dbReference type="ComplexPortal" id="CPX-5466">
    <property type="entry name" value="Vesicular SNARE complex SSO1-SPO20-SNC2"/>
</dbReference>
<dbReference type="DIP" id="DIP-4667N"/>
<dbReference type="FunCoup" id="P33328">
    <property type="interactions" value="422"/>
</dbReference>
<dbReference type="IntAct" id="P33328">
    <property type="interactions" value="24"/>
</dbReference>
<dbReference type="MINT" id="P33328"/>
<dbReference type="STRING" id="4932.YOR327C"/>
<dbReference type="TCDB" id="1.F.1.1.2">
    <property type="family name" value="the synaptosomal vesicle fusion pore (svf-pore) family"/>
</dbReference>
<dbReference type="iPTMnet" id="P33328"/>
<dbReference type="SwissPalm" id="P33328"/>
<dbReference type="PaxDb" id="4932-YOR327C"/>
<dbReference type="PeptideAtlas" id="P33328"/>
<dbReference type="TopDownProteomics" id="P33328"/>
<dbReference type="EnsemblFungi" id="YOR327C_mRNA">
    <property type="protein sequence ID" value="YOR327C"/>
    <property type="gene ID" value="YOR327C"/>
</dbReference>
<dbReference type="GeneID" id="854505"/>
<dbReference type="KEGG" id="sce:YOR327C"/>
<dbReference type="AGR" id="SGD:S000005854"/>
<dbReference type="SGD" id="S000005854">
    <property type="gene designation" value="SNC2"/>
</dbReference>
<dbReference type="VEuPathDB" id="FungiDB:YOR327C"/>
<dbReference type="eggNOG" id="KOG0860">
    <property type="taxonomic scope" value="Eukaryota"/>
</dbReference>
<dbReference type="GeneTree" id="ENSGT00940000155005"/>
<dbReference type="HOGENOM" id="CLU_064620_2_1_1"/>
<dbReference type="InParanoid" id="P33328"/>
<dbReference type="OMA" id="TEQFHRS"/>
<dbReference type="OrthoDB" id="190375at2759"/>
<dbReference type="BioCyc" id="YEAST:G3O-33804-MONOMER"/>
<dbReference type="BioGRID-ORCS" id="854505">
    <property type="hits" value="0 hits in 10 CRISPR screens"/>
</dbReference>
<dbReference type="PRO" id="PR:P33328"/>
<dbReference type="Proteomes" id="UP000002311">
    <property type="component" value="Chromosome XV"/>
</dbReference>
<dbReference type="RNAct" id="P33328">
    <property type="molecule type" value="protein"/>
</dbReference>
<dbReference type="GO" id="GO:0071944">
    <property type="term" value="C:cell periphery"/>
    <property type="evidence" value="ECO:0007005"/>
    <property type="project" value="SGD"/>
</dbReference>
<dbReference type="GO" id="GO:0005933">
    <property type="term" value="C:cellular bud"/>
    <property type="evidence" value="ECO:0007005"/>
    <property type="project" value="SGD"/>
</dbReference>
<dbReference type="GO" id="GO:0005829">
    <property type="term" value="C:cytosol"/>
    <property type="evidence" value="ECO:0007669"/>
    <property type="project" value="GOC"/>
</dbReference>
<dbReference type="GO" id="GO:0005768">
    <property type="term" value="C:endosome"/>
    <property type="evidence" value="ECO:0000314"/>
    <property type="project" value="SGD"/>
</dbReference>
<dbReference type="GO" id="GO:0010008">
    <property type="term" value="C:endosome membrane"/>
    <property type="evidence" value="ECO:0000303"/>
    <property type="project" value="ComplexPortal"/>
</dbReference>
<dbReference type="GO" id="GO:0000139">
    <property type="term" value="C:Golgi membrane"/>
    <property type="evidence" value="ECO:0000303"/>
    <property type="project" value="ComplexPortal"/>
</dbReference>
<dbReference type="GO" id="GO:0005886">
    <property type="term" value="C:plasma membrane"/>
    <property type="evidence" value="ECO:0000314"/>
    <property type="project" value="SGD"/>
</dbReference>
<dbReference type="GO" id="GO:0005628">
    <property type="term" value="C:prospore membrane"/>
    <property type="evidence" value="ECO:0000303"/>
    <property type="project" value="ComplexPortal"/>
</dbReference>
<dbReference type="GO" id="GO:0031201">
    <property type="term" value="C:SNARE complex"/>
    <property type="evidence" value="ECO:0000353"/>
    <property type="project" value="ComplexPortal"/>
</dbReference>
<dbReference type="GO" id="GO:0005802">
    <property type="term" value="C:trans-Golgi network"/>
    <property type="evidence" value="ECO:0000314"/>
    <property type="project" value="SGD"/>
</dbReference>
<dbReference type="GO" id="GO:0030658">
    <property type="term" value="C:transport vesicle membrane"/>
    <property type="evidence" value="ECO:0000314"/>
    <property type="project" value="SGD"/>
</dbReference>
<dbReference type="GO" id="GO:0060090">
    <property type="term" value="F:molecular adaptor activity"/>
    <property type="evidence" value="ECO:0000269"/>
    <property type="project" value="DisProt"/>
</dbReference>
<dbReference type="GO" id="GO:0005484">
    <property type="term" value="F:SNAP receptor activity"/>
    <property type="evidence" value="ECO:0000314"/>
    <property type="project" value="SGD"/>
</dbReference>
<dbReference type="GO" id="GO:0019905">
    <property type="term" value="F:syntaxin binding"/>
    <property type="evidence" value="ECO:0000318"/>
    <property type="project" value="GO_Central"/>
</dbReference>
<dbReference type="GO" id="GO:0031321">
    <property type="term" value="P:ascospore-type prospore assembly"/>
    <property type="evidence" value="ECO:0000303"/>
    <property type="project" value="ComplexPortal"/>
</dbReference>
<dbReference type="GO" id="GO:0006897">
    <property type="term" value="P:endocytosis"/>
    <property type="evidence" value="ECO:0000316"/>
    <property type="project" value="SGD"/>
</dbReference>
<dbReference type="GO" id="GO:0006887">
    <property type="term" value="P:exocytosis"/>
    <property type="evidence" value="ECO:0000315"/>
    <property type="project" value="SGD"/>
</dbReference>
<dbReference type="GO" id="GO:0006895">
    <property type="term" value="P:Golgi to endosome transport"/>
    <property type="evidence" value="ECO:0000303"/>
    <property type="project" value="ComplexPortal"/>
</dbReference>
<dbReference type="GO" id="GO:0006893">
    <property type="term" value="P:Golgi to plasma membrane transport"/>
    <property type="evidence" value="ECO:0000315"/>
    <property type="project" value="SGD"/>
</dbReference>
<dbReference type="GO" id="GO:0048210">
    <property type="term" value="P:Golgi vesicle fusion to target membrane"/>
    <property type="evidence" value="ECO:0000303"/>
    <property type="project" value="ComplexPortal"/>
</dbReference>
<dbReference type="GO" id="GO:0006886">
    <property type="term" value="P:intracellular protein transport"/>
    <property type="evidence" value="ECO:0000303"/>
    <property type="project" value="ComplexPortal"/>
</dbReference>
<dbReference type="GO" id="GO:0042147">
    <property type="term" value="P:retrograde transport, endosome to Golgi"/>
    <property type="evidence" value="ECO:0000303"/>
    <property type="project" value="ComplexPortal"/>
</dbReference>
<dbReference type="GO" id="GO:0043934">
    <property type="term" value="P:sporulation"/>
    <property type="evidence" value="ECO:0000314"/>
    <property type="project" value="ComplexPortal"/>
</dbReference>
<dbReference type="GO" id="GO:0006906">
    <property type="term" value="P:vesicle fusion"/>
    <property type="evidence" value="ECO:0000314"/>
    <property type="project" value="ComplexPortal"/>
</dbReference>
<dbReference type="GO" id="GO:0099500">
    <property type="term" value="P:vesicle fusion to plasma membrane"/>
    <property type="evidence" value="ECO:0000303"/>
    <property type="project" value="ComplexPortal"/>
</dbReference>
<dbReference type="GO" id="GO:0048280">
    <property type="term" value="P:vesicle fusion with Golgi apparatus"/>
    <property type="evidence" value="ECO:0000303"/>
    <property type="project" value="ComplexPortal"/>
</dbReference>
<dbReference type="CDD" id="cd15874">
    <property type="entry name" value="R-SNARE_Snc1"/>
    <property type="match status" value="1"/>
</dbReference>
<dbReference type="DisProt" id="DP01502"/>
<dbReference type="FunFam" id="1.20.5.110:FF:000063">
    <property type="entry name" value="Synaptobrevin 1"/>
    <property type="match status" value="1"/>
</dbReference>
<dbReference type="Gene3D" id="1.20.5.110">
    <property type="match status" value="1"/>
</dbReference>
<dbReference type="InterPro" id="IPR001388">
    <property type="entry name" value="Synaptobrevin-like"/>
</dbReference>
<dbReference type="InterPro" id="IPR016444">
    <property type="entry name" value="Synaptobrevin/VAMP"/>
</dbReference>
<dbReference type="InterPro" id="IPR042855">
    <property type="entry name" value="V_SNARE_CC"/>
</dbReference>
<dbReference type="PANTHER" id="PTHR45701">
    <property type="entry name" value="SYNAPTOBREVIN FAMILY MEMBER"/>
    <property type="match status" value="1"/>
</dbReference>
<dbReference type="Pfam" id="PF00957">
    <property type="entry name" value="Synaptobrevin"/>
    <property type="match status" value="1"/>
</dbReference>
<dbReference type="PIRSF" id="PIRSF005409">
    <property type="entry name" value="Synaptobrevin_euk"/>
    <property type="match status" value="1"/>
</dbReference>
<dbReference type="PRINTS" id="PR00219">
    <property type="entry name" value="SYNAPTOBREVN"/>
</dbReference>
<dbReference type="SUPFAM" id="SSF58038">
    <property type="entry name" value="SNARE fusion complex"/>
    <property type="match status" value="1"/>
</dbReference>
<dbReference type="PROSITE" id="PS00417">
    <property type="entry name" value="SYNAPTOBREVIN"/>
    <property type="match status" value="1"/>
</dbReference>
<dbReference type="PROSITE" id="PS50892">
    <property type="entry name" value="V_SNARE"/>
    <property type="match status" value="1"/>
</dbReference>
<accession>P33328</accession>
<accession>D6W324</accession>
<evidence type="ECO:0000255" key="1"/>
<evidence type="ECO:0000255" key="2">
    <source>
        <dbReference type="PROSITE-ProRule" id="PRU00290"/>
    </source>
</evidence>
<evidence type="ECO:0000256" key="3">
    <source>
        <dbReference type="SAM" id="MobiDB-lite"/>
    </source>
</evidence>
<evidence type="ECO:0000269" key="4">
    <source>
    </source>
</evidence>
<evidence type="ECO:0000269" key="5">
    <source>
    </source>
</evidence>
<evidence type="ECO:0000269" key="6">
    <source>
    </source>
</evidence>
<evidence type="ECO:0000305" key="7"/>
<evidence type="ECO:0000305" key="8">
    <source>
    </source>
</evidence>
<evidence type="ECO:0007744" key="9">
    <source>
    </source>
</evidence>
<evidence type="ECO:0007744" key="10">
    <source>
    </source>
</evidence>
<gene>
    <name type="primary">SNC2</name>
    <name type="ordered locus">YOR327C</name>
</gene>
<reference key="1">
    <citation type="journal article" date="1993" name="Cell">
        <title>Homologs of the synaptobrevin/VAMP family of synaptic vesicle proteins function on the late secretory pathway in S. cerevisiae.</title>
        <authorList>
            <person name="Protopopov V."/>
            <person name="Govidan B."/>
            <person name="Novick P."/>
            <person name="Gerst J.E."/>
        </authorList>
    </citation>
    <scope>NUCLEOTIDE SEQUENCE</scope>
    <source>
        <strain>S288c / GRF88</strain>
    </source>
</reference>
<reference key="2">
    <citation type="journal article" date="1996" name="Yeast">
        <title>Sequence of 29 kb around the PDR10 locus on the right arm of Saccharomyces cerevisiae chromosome XV: similarity to part of chromosome I.</title>
        <authorList>
            <person name="Parle-McDermott A.G."/>
            <person name="Hand N.J."/>
            <person name="Goulding S.E."/>
            <person name="Wolfe K.H."/>
        </authorList>
    </citation>
    <scope>NUCLEOTIDE SEQUENCE [GENOMIC DNA]</scope>
</reference>
<reference key="3">
    <citation type="journal article" date="1997" name="Nature">
        <title>The nucleotide sequence of Saccharomyces cerevisiae chromosome XV.</title>
        <authorList>
            <person name="Dujon B."/>
            <person name="Albermann K."/>
            <person name="Aldea M."/>
            <person name="Alexandraki D."/>
            <person name="Ansorge W."/>
            <person name="Arino J."/>
            <person name="Benes V."/>
            <person name="Bohn C."/>
            <person name="Bolotin-Fukuhara M."/>
            <person name="Bordonne R."/>
            <person name="Boyer J."/>
            <person name="Camasses A."/>
            <person name="Casamayor A."/>
            <person name="Casas C."/>
            <person name="Cheret G."/>
            <person name="Cziepluch C."/>
            <person name="Daignan-Fornier B."/>
            <person name="Dang V.-D."/>
            <person name="de Haan M."/>
            <person name="Delius H."/>
            <person name="Durand P."/>
            <person name="Fairhead C."/>
            <person name="Feldmann H."/>
            <person name="Gaillon L."/>
            <person name="Galisson F."/>
            <person name="Gamo F.-J."/>
            <person name="Gancedo C."/>
            <person name="Goffeau A."/>
            <person name="Goulding S.E."/>
            <person name="Grivell L.A."/>
            <person name="Habbig B."/>
            <person name="Hand N.J."/>
            <person name="Hani J."/>
            <person name="Hattenhorst U."/>
            <person name="Hebling U."/>
            <person name="Hernando Y."/>
            <person name="Herrero E."/>
            <person name="Heumann K."/>
            <person name="Hiesel R."/>
            <person name="Hilger F."/>
            <person name="Hofmann B."/>
            <person name="Hollenberg C.P."/>
            <person name="Hughes B."/>
            <person name="Jauniaux J.-C."/>
            <person name="Kalogeropoulos A."/>
            <person name="Katsoulou C."/>
            <person name="Kordes E."/>
            <person name="Lafuente M.J."/>
            <person name="Landt O."/>
            <person name="Louis E.J."/>
            <person name="Maarse A.C."/>
            <person name="Madania A."/>
            <person name="Mannhaupt G."/>
            <person name="Marck C."/>
            <person name="Martin R.P."/>
            <person name="Mewes H.-W."/>
            <person name="Michaux G."/>
            <person name="Paces V."/>
            <person name="Parle-McDermott A.G."/>
            <person name="Pearson B.M."/>
            <person name="Perrin A."/>
            <person name="Pettersson B."/>
            <person name="Poch O."/>
            <person name="Pohl T.M."/>
            <person name="Poirey R."/>
            <person name="Portetelle D."/>
            <person name="Pujol A."/>
            <person name="Purnelle B."/>
            <person name="Ramezani Rad M."/>
            <person name="Rechmann S."/>
            <person name="Schwager C."/>
            <person name="Schweizer M."/>
            <person name="Sor F."/>
            <person name="Sterky F."/>
            <person name="Tarassov I.A."/>
            <person name="Teodoru C."/>
            <person name="Tettelin H."/>
            <person name="Thierry A."/>
            <person name="Tobiasch E."/>
            <person name="Tzermia M."/>
            <person name="Uhlen M."/>
            <person name="Unseld M."/>
            <person name="Valens M."/>
            <person name="Vandenbol M."/>
            <person name="Vetter I."/>
            <person name="Vlcek C."/>
            <person name="Voet M."/>
            <person name="Volckaert G."/>
            <person name="Voss H."/>
            <person name="Wambutt R."/>
            <person name="Wedler H."/>
            <person name="Wiemann S."/>
            <person name="Winsor B."/>
            <person name="Wolfe K.H."/>
            <person name="Zollner A."/>
            <person name="Zumstein E."/>
            <person name="Kleine K."/>
        </authorList>
    </citation>
    <scope>NUCLEOTIDE SEQUENCE [LARGE SCALE GENOMIC DNA]</scope>
    <source>
        <strain>ATCC 204508 / S288c</strain>
    </source>
</reference>
<reference key="4">
    <citation type="journal article" date="2014" name="G3 (Bethesda)">
        <title>The reference genome sequence of Saccharomyces cerevisiae: Then and now.</title>
        <authorList>
            <person name="Engel S.R."/>
            <person name="Dietrich F.S."/>
            <person name="Fisk D.G."/>
            <person name="Binkley G."/>
            <person name="Balakrishnan R."/>
            <person name="Costanzo M.C."/>
            <person name="Dwight S.S."/>
            <person name="Hitz B.C."/>
            <person name="Karra K."/>
            <person name="Nash R.S."/>
            <person name="Weng S."/>
            <person name="Wong E.D."/>
            <person name="Lloyd P."/>
            <person name="Skrzypek M.S."/>
            <person name="Miyasato S.R."/>
            <person name="Simison M."/>
            <person name="Cherry J.M."/>
        </authorList>
    </citation>
    <scope>GENOME REANNOTATION</scope>
    <source>
        <strain>ATCC 204508 / S288c</strain>
    </source>
</reference>
<reference key="5">
    <citation type="journal article" date="2003" name="Nature">
        <title>Global analysis of protein expression in yeast.</title>
        <authorList>
            <person name="Ghaemmaghami S."/>
            <person name="Huh W.-K."/>
            <person name="Bower K."/>
            <person name="Howson R.W."/>
            <person name="Belle A."/>
            <person name="Dephoure N."/>
            <person name="O'Shea E.K."/>
            <person name="Weissman J.S."/>
        </authorList>
    </citation>
    <scope>LEVEL OF PROTEIN EXPRESSION [LARGE SCALE ANALYSIS]</scope>
</reference>
<reference key="6">
    <citation type="journal article" date="2003" name="Nat. Biotechnol.">
        <title>A proteomics approach to understanding protein ubiquitination.</title>
        <authorList>
            <person name="Peng J."/>
            <person name="Schwartz D."/>
            <person name="Elias J.E."/>
            <person name="Thoreen C.C."/>
            <person name="Cheng D."/>
            <person name="Marsischky G."/>
            <person name="Roelofs J."/>
            <person name="Finley D."/>
            <person name="Gygi S.P."/>
        </authorList>
    </citation>
    <scope>UBIQUITINATION [LARGE SCALE ANALYSIS] AT LYS-62</scope>
    <scope>IDENTIFICATION BY MASS SPECTROMETRY</scope>
    <source>
        <strain>SUB592</strain>
    </source>
</reference>
<reference key="7">
    <citation type="journal article" date="2005" name="EMBO J.">
        <title>Swf1-dependent palmitoylation of the SNARE Tlg1 prevents its ubiquitination and degradation.</title>
        <authorList>
            <person name="Valdez-Taubas J."/>
            <person name="Pelham H.R.B."/>
        </authorList>
    </citation>
    <scope>PALMITOYLATION AT CYS-94</scope>
</reference>
<reference key="8">
    <citation type="journal article" date="2006" name="Cell">
        <title>Global analysis of protein palmitoylation in yeast.</title>
        <authorList>
            <person name="Roth A.F."/>
            <person name="Wan J."/>
            <person name="Bailey A.O."/>
            <person name="Sun B."/>
            <person name="Kuchar J.A."/>
            <person name="Green W.N."/>
            <person name="Phinney B.S."/>
            <person name="Yates J.R. III"/>
            <person name="Davis N.G."/>
        </authorList>
    </citation>
    <scope>PALMITOYLATION</scope>
</reference>
<reference key="9">
    <citation type="journal article" date="2009" name="Science">
        <title>Global analysis of Cdk1 substrate phosphorylation sites provides insights into evolution.</title>
        <authorList>
            <person name="Holt L.J."/>
            <person name="Tuch B.B."/>
            <person name="Villen J."/>
            <person name="Johnson A.D."/>
            <person name="Gygi S.P."/>
            <person name="Morgan D.O."/>
        </authorList>
    </citation>
    <scope>PHOSPHORYLATION [LARGE SCALE ANALYSIS] AT SER-58</scope>
    <scope>IDENTIFICATION BY MASS SPECTROMETRY [LARGE SCALE ANALYSIS]</scope>
</reference>
<reference key="10">
    <citation type="journal article" date="2012" name="Proteomics">
        <title>Sites of ubiquitin attachment in Saccharomyces cerevisiae.</title>
        <authorList>
            <person name="Starita L.M."/>
            <person name="Lo R.S."/>
            <person name="Eng J.K."/>
            <person name="von Haller P.D."/>
            <person name="Fields S."/>
        </authorList>
    </citation>
    <scope>UBIQUITINATION [LARGE SCALE ANALYSIS] AT LYS-62</scope>
    <scope>IDENTIFICATION BY MASS SPECTROMETRY [LARGE SCALE ANALYSIS]</scope>
</reference>